<keyword id="KW-0903">Direct protein sequencing</keyword>
<keyword id="KW-0349">Heme</keyword>
<keyword id="KW-0408">Iron</keyword>
<keyword id="KW-0479">Metal-binding</keyword>
<keyword id="KW-0561">Oxygen transport</keyword>
<keyword id="KW-0813">Transport</keyword>
<organism>
    <name type="scientific">Mordacia mordax</name>
    <name type="common">Southern hemisphere lamprey</name>
    <dbReference type="NCBI Taxonomy" id="7755"/>
    <lineage>
        <taxon>Eukaryota</taxon>
        <taxon>Metazoa</taxon>
        <taxon>Chordata</taxon>
        <taxon>Craniata</taxon>
        <taxon>Vertebrata</taxon>
        <taxon>Cyclostomata</taxon>
        <taxon>Hyperoartia</taxon>
        <taxon>Petromyzontiformes</taxon>
        <taxon>Petromyzontidae</taxon>
        <taxon>Mordacia</taxon>
    </lineage>
</organism>
<protein>
    <recommendedName>
        <fullName>Globin-3</fullName>
    </recommendedName>
    <alternativeName>
        <fullName>Hemoglobin III</fullName>
    </alternativeName>
</protein>
<reference key="1">
    <citation type="journal article" date="1991" name="Biol. Chem. Hoppe-Seyler">
        <title>The primary structure of the hemoglobins of a southern hemisphere lamprey (Mordacia mordax, Cyclostomata).</title>
        <authorList>
            <person name="Hombrados I."/>
            <person name="Vidal Y."/>
            <person name="Rodewald K."/>
            <person name="Braunitzer G."/>
            <person name="Neuzil E."/>
        </authorList>
    </citation>
    <scope>PROTEIN SEQUENCE OF 2-150</scope>
</reference>
<accession>P21199</accession>
<evidence type="ECO:0000250" key="1"/>
<evidence type="ECO:0000255" key="2">
    <source>
        <dbReference type="PROSITE-ProRule" id="PRU00238"/>
    </source>
</evidence>
<proteinExistence type="evidence at protein level"/>
<feature type="initiator methionine" description="Removed" evidence="1">
    <location>
        <position position="1"/>
    </location>
</feature>
<feature type="chain" id="PRO_0000052532" description="Globin-3">
    <location>
        <begin position="2"/>
        <end position="150"/>
    </location>
</feature>
<feature type="domain" description="Globin" evidence="2">
    <location>
        <begin position="11"/>
        <end position="150"/>
    </location>
</feature>
<feature type="binding site" description="distal binding residue" evidence="2">
    <location>
        <position position="74"/>
    </location>
    <ligand>
        <name>heme b</name>
        <dbReference type="ChEBI" id="CHEBI:60344"/>
    </ligand>
    <ligandPart>
        <name>Fe</name>
        <dbReference type="ChEBI" id="CHEBI:18248"/>
    </ligandPart>
</feature>
<feature type="binding site" description="proximal binding residue" evidence="2">
    <location>
        <position position="106"/>
    </location>
    <ligand>
        <name>heme b</name>
        <dbReference type="ChEBI" id="CHEBI:60344"/>
    </ligand>
    <ligandPart>
        <name>Fe</name>
        <dbReference type="ChEBI" id="CHEBI:18248"/>
    </ligandPart>
</feature>
<name>GLB3_MORMR</name>
<sequence>MPIVDSGSVSPLTAADKTKILAAWDLVYKNYEKNSVDILVKFFTGTPAAQAFFPKFKGLTTADDLKKSSDVRWHAERIINAVNDAVKSMDDTEKMSMKLKELSNKHVKNFNVDRKYFKVLAGVIADTVAPGDASFEKLMSIICILLNSAY</sequence>
<dbReference type="PIR" id="S13460">
    <property type="entry name" value="S13460"/>
</dbReference>
<dbReference type="SMR" id="P21199"/>
<dbReference type="GO" id="GO:0020037">
    <property type="term" value="F:heme binding"/>
    <property type="evidence" value="ECO:0007669"/>
    <property type="project" value="InterPro"/>
</dbReference>
<dbReference type="GO" id="GO:0005506">
    <property type="term" value="F:iron ion binding"/>
    <property type="evidence" value="ECO:0007669"/>
    <property type="project" value="InterPro"/>
</dbReference>
<dbReference type="GO" id="GO:0016491">
    <property type="term" value="F:oxidoreductase activity"/>
    <property type="evidence" value="ECO:0007669"/>
    <property type="project" value="UniProtKB-ARBA"/>
</dbReference>
<dbReference type="GO" id="GO:0019825">
    <property type="term" value="F:oxygen binding"/>
    <property type="evidence" value="ECO:0007669"/>
    <property type="project" value="InterPro"/>
</dbReference>
<dbReference type="GO" id="GO:0005344">
    <property type="term" value="F:oxygen carrier activity"/>
    <property type="evidence" value="ECO:0007669"/>
    <property type="project" value="UniProtKB-KW"/>
</dbReference>
<dbReference type="Gene3D" id="1.10.490.10">
    <property type="entry name" value="Globins"/>
    <property type="match status" value="1"/>
</dbReference>
<dbReference type="InterPro" id="IPR000971">
    <property type="entry name" value="Globin"/>
</dbReference>
<dbReference type="InterPro" id="IPR009050">
    <property type="entry name" value="Globin-like_sf"/>
</dbReference>
<dbReference type="InterPro" id="IPR012292">
    <property type="entry name" value="Globin/Proto"/>
</dbReference>
<dbReference type="InterPro" id="IPR013314">
    <property type="entry name" value="Globin_lamprey/hagfish"/>
</dbReference>
<dbReference type="PANTHER" id="PTHR46783">
    <property type="entry name" value="CYTOGLOBIN"/>
    <property type="match status" value="1"/>
</dbReference>
<dbReference type="PANTHER" id="PTHR46783:SF1">
    <property type="entry name" value="CYTOGLOBIN-1-RELATED"/>
    <property type="match status" value="1"/>
</dbReference>
<dbReference type="Pfam" id="PF00042">
    <property type="entry name" value="Globin"/>
    <property type="match status" value="1"/>
</dbReference>
<dbReference type="PRINTS" id="PR01906">
    <property type="entry name" value="FISHGLOBIN"/>
</dbReference>
<dbReference type="SUPFAM" id="SSF46458">
    <property type="entry name" value="Globin-like"/>
    <property type="match status" value="1"/>
</dbReference>
<dbReference type="PROSITE" id="PS01033">
    <property type="entry name" value="GLOBIN"/>
    <property type="match status" value="1"/>
</dbReference>
<comment type="subunit">
    <text>Monomer.</text>
</comment>
<comment type="similarity">
    <text evidence="2">Belongs to the globin family.</text>
</comment>